<gene>
    <name evidence="1" type="primary">rps17e</name>
    <name type="ordered locus">STK_03184</name>
    <name type="ORF">STS046</name>
</gene>
<evidence type="ECO:0000255" key="1">
    <source>
        <dbReference type="HAMAP-Rule" id="MF_00511"/>
    </source>
</evidence>
<evidence type="ECO:0000305" key="2"/>
<name>RS17E_SULTO</name>
<reference key="1">
    <citation type="journal article" date="2001" name="DNA Res.">
        <title>Complete genome sequence of an aerobic thermoacidophilic Crenarchaeon, Sulfolobus tokodaii strain7.</title>
        <authorList>
            <person name="Kawarabayasi Y."/>
            <person name="Hino Y."/>
            <person name="Horikawa H."/>
            <person name="Jin-no K."/>
            <person name="Takahashi M."/>
            <person name="Sekine M."/>
            <person name="Baba S."/>
            <person name="Ankai A."/>
            <person name="Kosugi H."/>
            <person name="Hosoyama A."/>
            <person name="Fukui S."/>
            <person name="Nagai Y."/>
            <person name="Nishijima K."/>
            <person name="Otsuka R."/>
            <person name="Nakazawa H."/>
            <person name="Takamiya M."/>
            <person name="Kato Y."/>
            <person name="Yoshizawa T."/>
            <person name="Tanaka T."/>
            <person name="Kudoh Y."/>
            <person name="Yamazaki J."/>
            <person name="Kushida N."/>
            <person name="Oguchi A."/>
            <person name="Aoki K."/>
            <person name="Masuda S."/>
            <person name="Yanagii M."/>
            <person name="Nishimura M."/>
            <person name="Yamagishi A."/>
            <person name="Oshima T."/>
            <person name="Kikuchi H."/>
        </authorList>
    </citation>
    <scope>NUCLEOTIDE SEQUENCE [LARGE SCALE GENOMIC DNA]</scope>
    <source>
        <strain>DSM 16993 / JCM 10545 / NBRC 100140 / 7</strain>
    </source>
</reference>
<feature type="chain" id="PRO_0000141567" description="Small ribosomal subunit protein eS17">
    <location>
        <begin position="1"/>
        <end position="78"/>
    </location>
</feature>
<accession>Q975V4</accession>
<accession>F9VMT7</accession>
<keyword id="KW-1185">Reference proteome</keyword>
<keyword id="KW-0687">Ribonucleoprotein</keyword>
<keyword id="KW-0689">Ribosomal protein</keyword>
<proteinExistence type="inferred from homology"/>
<protein>
    <recommendedName>
        <fullName evidence="1">Small ribosomal subunit protein eS17</fullName>
    </recommendedName>
    <alternativeName>
        <fullName evidence="2">30S ribosomal protein S17e</fullName>
    </alternativeName>
</protein>
<sequence>MGNVYTKDIKRVAMQLYEKFKDQISTDYQANKKIVDAYVDVMSKKVRNRIAGYLTRYAKMQRTQVKNEVEEEYIEGEG</sequence>
<organism>
    <name type="scientific">Sulfurisphaera tokodaii (strain DSM 16993 / JCM 10545 / NBRC 100140 / 7)</name>
    <name type="common">Sulfolobus tokodaii</name>
    <dbReference type="NCBI Taxonomy" id="273063"/>
    <lineage>
        <taxon>Archaea</taxon>
        <taxon>Thermoproteota</taxon>
        <taxon>Thermoprotei</taxon>
        <taxon>Sulfolobales</taxon>
        <taxon>Sulfolobaceae</taxon>
        <taxon>Sulfurisphaera</taxon>
    </lineage>
</organism>
<dbReference type="EMBL" id="BA000023">
    <property type="protein sequence ID" value="BAK54234.1"/>
    <property type="molecule type" value="Genomic_DNA"/>
</dbReference>
<dbReference type="RefSeq" id="WP_052846873.1">
    <property type="nucleotide sequence ID" value="NC_003106.2"/>
</dbReference>
<dbReference type="SMR" id="Q975V4"/>
<dbReference type="STRING" id="273063.STK_03184"/>
<dbReference type="KEGG" id="sto:STK_03184"/>
<dbReference type="PATRIC" id="fig|273063.9.peg.372"/>
<dbReference type="eggNOG" id="arCOG01885">
    <property type="taxonomic scope" value="Archaea"/>
</dbReference>
<dbReference type="OrthoDB" id="52479at2157"/>
<dbReference type="Proteomes" id="UP000001015">
    <property type="component" value="Chromosome"/>
</dbReference>
<dbReference type="GO" id="GO:0005829">
    <property type="term" value="C:cytosol"/>
    <property type="evidence" value="ECO:0007669"/>
    <property type="project" value="UniProtKB-ARBA"/>
</dbReference>
<dbReference type="GO" id="GO:1990904">
    <property type="term" value="C:ribonucleoprotein complex"/>
    <property type="evidence" value="ECO:0007669"/>
    <property type="project" value="UniProtKB-KW"/>
</dbReference>
<dbReference type="GO" id="GO:0005840">
    <property type="term" value="C:ribosome"/>
    <property type="evidence" value="ECO:0007669"/>
    <property type="project" value="UniProtKB-KW"/>
</dbReference>
<dbReference type="GO" id="GO:0003735">
    <property type="term" value="F:structural constituent of ribosome"/>
    <property type="evidence" value="ECO:0007669"/>
    <property type="project" value="InterPro"/>
</dbReference>
<dbReference type="GO" id="GO:0006412">
    <property type="term" value="P:translation"/>
    <property type="evidence" value="ECO:0007669"/>
    <property type="project" value="UniProtKB-UniRule"/>
</dbReference>
<dbReference type="Gene3D" id="1.10.60.20">
    <property type="entry name" value="Ribosomal protein S17e-like"/>
    <property type="match status" value="1"/>
</dbReference>
<dbReference type="HAMAP" id="MF_00511">
    <property type="entry name" value="Ribosomal_eS17"/>
    <property type="match status" value="1"/>
</dbReference>
<dbReference type="InterPro" id="IPR001210">
    <property type="entry name" value="Ribosomal_eS17"/>
</dbReference>
<dbReference type="InterPro" id="IPR018273">
    <property type="entry name" value="Ribosomal_eS17_CS"/>
</dbReference>
<dbReference type="InterPro" id="IPR036401">
    <property type="entry name" value="Ribosomal_eS17_sf"/>
</dbReference>
<dbReference type="NCBIfam" id="NF002242">
    <property type="entry name" value="PRK01151.1"/>
    <property type="match status" value="1"/>
</dbReference>
<dbReference type="PANTHER" id="PTHR10732">
    <property type="entry name" value="40S RIBOSOMAL PROTEIN S17"/>
    <property type="match status" value="1"/>
</dbReference>
<dbReference type="PANTHER" id="PTHR10732:SF0">
    <property type="entry name" value="40S RIBOSOMAL PROTEIN S17"/>
    <property type="match status" value="1"/>
</dbReference>
<dbReference type="Pfam" id="PF00833">
    <property type="entry name" value="Ribosomal_S17e"/>
    <property type="match status" value="1"/>
</dbReference>
<dbReference type="SUPFAM" id="SSF116820">
    <property type="entry name" value="Rps17e-like"/>
    <property type="match status" value="1"/>
</dbReference>
<dbReference type="PROSITE" id="PS00712">
    <property type="entry name" value="RIBOSOMAL_S17E"/>
    <property type="match status" value="1"/>
</dbReference>
<comment type="similarity">
    <text evidence="1">Belongs to the eukaryotic ribosomal protein eS17 family.</text>
</comment>